<organism>
    <name type="scientific">Staphylococcus saprophyticus subsp. saprophyticus (strain ATCC 15305 / DSM 20229 / NCIMB 8711 / NCTC 7292 / S-41)</name>
    <dbReference type="NCBI Taxonomy" id="342451"/>
    <lineage>
        <taxon>Bacteria</taxon>
        <taxon>Bacillati</taxon>
        <taxon>Bacillota</taxon>
        <taxon>Bacilli</taxon>
        <taxon>Bacillales</taxon>
        <taxon>Staphylococcaceae</taxon>
        <taxon>Staphylococcus</taxon>
    </lineage>
</organism>
<protein>
    <recommendedName>
        <fullName evidence="1">Serine hydroxymethyltransferase</fullName>
        <shortName evidence="1">SHMT</shortName>
        <shortName evidence="1">Serine methylase</shortName>
        <ecNumber evidence="1">2.1.2.1</ecNumber>
    </recommendedName>
</protein>
<keyword id="KW-0028">Amino-acid biosynthesis</keyword>
<keyword id="KW-0963">Cytoplasm</keyword>
<keyword id="KW-0554">One-carbon metabolism</keyword>
<keyword id="KW-0663">Pyridoxal phosphate</keyword>
<keyword id="KW-1185">Reference proteome</keyword>
<keyword id="KW-0808">Transferase</keyword>
<name>GLYA_STAS1</name>
<gene>
    <name evidence="1" type="primary">glyA</name>
    <name type="ordered locus">SSP0771</name>
</gene>
<comment type="function">
    <text evidence="1">Catalyzes the reversible interconversion of serine and glycine with tetrahydrofolate (THF) serving as the one-carbon carrier. This reaction serves as the major source of one-carbon groups required for the biosynthesis of purines, thymidylate, methionine, and other important biomolecules. Also exhibits THF-independent aldolase activity toward beta-hydroxyamino acids, producing glycine and aldehydes, via a retro-aldol mechanism.</text>
</comment>
<comment type="catalytic activity">
    <reaction evidence="1">
        <text>(6R)-5,10-methylene-5,6,7,8-tetrahydrofolate + glycine + H2O = (6S)-5,6,7,8-tetrahydrofolate + L-serine</text>
        <dbReference type="Rhea" id="RHEA:15481"/>
        <dbReference type="ChEBI" id="CHEBI:15377"/>
        <dbReference type="ChEBI" id="CHEBI:15636"/>
        <dbReference type="ChEBI" id="CHEBI:33384"/>
        <dbReference type="ChEBI" id="CHEBI:57305"/>
        <dbReference type="ChEBI" id="CHEBI:57453"/>
        <dbReference type="EC" id="2.1.2.1"/>
    </reaction>
</comment>
<comment type="cofactor">
    <cofactor evidence="1">
        <name>pyridoxal 5'-phosphate</name>
        <dbReference type="ChEBI" id="CHEBI:597326"/>
    </cofactor>
</comment>
<comment type="pathway">
    <text evidence="1">One-carbon metabolism; tetrahydrofolate interconversion.</text>
</comment>
<comment type="pathway">
    <text evidence="1">Amino-acid biosynthesis; glycine biosynthesis; glycine from L-serine: step 1/1.</text>
</comment>
<comment type="subunit">
    <text evidence="1">Homodimer.</text>
</comment>
<comment type="subcellular location">
    <subcellularLocation>
        <location evidence="1">Cytoplasm</location>
    </subcellularLocation>
</comment>
<comment type="similarity">
    <text evidence="1">Belongs to the SHMT family.</text>
</comment>
<accession>Q49Z60</accession>
<evidence type="ECO:0000255" key="1">
    <source>
        <dbReference type="HAMAP-Rule" id="MF_00051"/>
    </source>
</evidence>
<sequence length="412" mass="45273">MSFIQKQDKEIYEVIQNEFNRQNNNIELIASENFVSEAVMEAQGSVLTNKYAEGYPNRRYYGGCEYVDVSETLAIDRAKKLFGAEHVNVQPHSGSQANMAVYLVALEHGDTVLGMNLSHGGHLTHGAPVNFSGQFYNFVEYGVDQENEQIDYDEVLKVAKEHKPKLIVAGASAYSRTIDFKRFKEIADEVGAKLMVDMAHIAGLVAVGLHPNPVEYADFVTTTTHKTLRGPRGGMILCKEEYKKQIDKTIFPGIQSGPLEHVIAAKAVAFGEALQDDFKVYQQQVIQNAKTLANTLTDEGFRVVSGGTDNHLVAVDVKGSVGITGKVAEETLDAIGITCNKNTIPFDQEKPFVTSGIRLGTPAATTRGFDETAFEEVAKIISLVLKDPENEKALAEGKERVNTLTSKHPLYN</sequence>
<reference key="1">
    <citation type="journal article" date="2005" name="Proc. Natl. Acad. Sci. U.S.A.">
        <title>Whole genome sequence of Staphylococcus saprophyticus reveals the pathogenesis of uncomplicated urinary tract infection.</title>
        <authorList>
            <person name="Kuroda M."/>
            <person name="Yamashita A."/>
            <person name="Hirakawa H."/>
            <person name="Kumano M."/>
            <person name="Morikawa K."/>
            <person name="Higashide M."/>
            <person name="Maruyama A."/>
            <person name="Inose Y."/>
            <person name="Matoba K."/>
            <person name="Toh H."/>
            <person name="Kuhara S."/>
            <person name="Hattori M."/>
            <person name="Ohta T."/>
        </authorList>
    </citation>
    <scope>NUCLEOTIDE SEQUENCE [LARGE SCALE GENOMIC DNA]</scope>
    <source>
        <strain>ATCC 15305 / DSM 20229 / NCIMB 8711 / NCTC 7292 / S-41</strain>
    </source>
</reference>
<dbReference type="EC" id="2.1.2.1" evidence="1"/>
<dbReference type="EMBL" id="AP008934">
    <property type="protein sequence ID" value="BAE17916.1"/>
    <property type="molecule type" value="Genomic_DNA"/>
</dbReference>
<dbReference type="RefSeq" id="WP_011302674.1">
    <property type="nucleotide sequence ID" value="NC_007350.1"/>
</dbReference>
<dbReference type="SMR" id="Q49Z60"/>
<dbReference type="GeneID" id="3615836"/>
<dbReference type="KEGG" id="ssp:SSP0771"/>
<dbReference type="PATRIC" id="fig|342451.11.peg.773"/>
<dbReference type="eggNOG" id="COG0112">
    <property type="taxonomic scope" value="Bacteria"/>
</dbReference>
<dbReference type="HOGENOM" id="CLU_022477_2_1_9"/>
<dbReference type="OrthoDB" id="9803846at2"/>
<dbReference type="UniPathway" id="UPA00193"/>
<dbReference type="UniPathway" id="UPA00288">
    <property type="reaction ID" value="UER01023"/>
</dbReference>
<dbReference type="Proteomes" id="UP000006371">
    <property type="component" value="Chromosome"/>
</dbReference>
<dbReference type="GO" id="GO:0005829">
    <property type="term" value="C:cytosol"/>
    <property type="evidence" value="ECO:0007669"/>
    <property type="project" value="TreeGrafter"/>
</dbReference>
<dbReference type="GO" id="GO:0004372">
    <property type="term" value="F:glycine hydroxymethyltransferase activity"/>
    <property type="evidence" value="ECO:0007669"/>
    <property type="project" value="UniProtKB-UniRule"/>
</dbReference>
<dbReference type="GO" id="GO:0030170">
    <property type="term" value="F:pyridoxal phosphate binding"/>
    <property type="evidence" value="ECO:0007669"/>
    <property type="project" value="UniProtKB-UniRule"/>
</dbReference>
<dbReference type="GO" id="GO:0019264">
    <property type="term" value="P:glycine biosynthetic process from serine"/>
    <property type="evidence" value="ECO:0007669"/>
    <property type="project" value="UniProtKB-UniRule"/>
</dbReference>
<dbReference type="GO" id="GO:0035999">
    <property type="term" value="P:tetrahydrofolate interconversion"/>
    <property type="evidence" value="ECO:0007669"/>
    <property type="project" value="UniProtKB-UniRule"/>
</dbReference>
<dbReference type="CDD" id="cd00378">
    <property type="entry name" value="SHMT"/>
    <property type="match status" value="1"/>
</dbReference>
<dbReference type="FunFam" id="3.40.640.10:FF:000001">
    <property type="entry name" value="Serine hydroxymethyltransferase"/>
    <property type="match status" value="1"/>
</dbReference>
<dbReference type="FunFam" id="3.90.1150.10:FF:000003">
    <property type="entry name" value="Serine hydroxymethyltransferase"/>
    <property type="match status" value="1"/>
</dbReference>
<dbReference type="Gene3D" id="3.90.1150.10">
    <property type="entry name" value="Aspartate Aminotransferase, domain 1"/>
    <property type="match status" value="1"/>
</dbReference>
<dbReference type="Gene3D" id="3.40.640.10">
    <property type="entry name" value="Type I PLP-dependent aspartate aminotransferase-like (Major domain)"/>
    <property type="match status" value="1"/>
</dbReference>
<dbReference type="HAMAP" id="MF_00051">
    <property type="entry name" value="SHMT"/>
    <property type="match status" value="1"/>
</dbReference>
<dbReference type="InterPro" id="IPR015424">
    <property type="entry name" value="PyrdxlP-dep_Trfase"/>
</dbReference>
<dbReference type="InterPro" id="IPR015421">
    <property type="entry name" value="PyrdxlP-dep_Trfase_major"/>
</dbReference>
<dbReference type="InterPro" id="IPR015422">
    <property type="entry name" value="PyrdxlP-dep_Trfase_small"/>
</dbReference>
<dbReference type="InterPro" id="IPR001085">
    <property type="entry name" value="Ser_HO-MeTrfase"/>
</dbReference>
<dbReference type="InterPro" id="IPR049943">
    <property type="entry name" value="Ser_HO-MeTrfase-like"/>
</dbReference>
<dbReference type="InterPro" id="IPR019798">
    <property type="entry name" value="Ser_HO-MeTrfase_PLP_BS"/>
</dbReference>
<dbReference type="InterPro" id="IPR039429">
    <property type="entry name" value="SHMT-like_dom"/>
</dbReference>
<dbReference type="NCBIfam" id="NF000586">
    <property type="entry name" value="PRK00011.1"/>
    <property type="match status" value="1"/>
</dbReference>
<dbReference type="PANTHER" id="PTHR11680">
    <property type="entry name" value="SERINE HYDROXYMETHYLTRANSFERASE"/>
    <property type="match status" value="1"/>
</dbReference>
<dbReference type="PANTHER" id="PTHR11680:SF35">
    <property type="entry name" value="SERINE HYDROXYMETHYLTRANSFERASE 1"/>
    <property type="match status" value="1"/>
</dbReference>
<dbReference type="Pfam" id="PF00464">
    <property type="entry name" value="SHMT"/>
    <property type="match status" value="1"/>
</dbReference>
<dbReference type="PIRSF" id="PIRSF000412">
    <property type="entry name" value="SHMT"/>
    <property type="match status" value="1"/>
</dbReference>
<dbReference type="SUPFAM" id="SSF53383">
    <property type="entry name" value="PLP-dependent transferases"/>
    <property type="match status" value="1"/>
</dbReference>
<dbReference type="PROSITE" id="PS00096">
    <property type="entry name" value="SHMT"/>
    <property type="match status" value="1"/>
</dbReference>
<feature type="chain" id="PRO_0000235029" description="Serine hydroxymethyltransferase">
    <location>
        <begin position="1"/>
        <end position="412"/>
    </location>
</feature>
<feature type="binding site" evidence="1">
    <location>
        <position position="117"/>
    </location>
    <ligand>
        <name>(6S)-5,6,7,8-tetrahydrofolate</name>
        <dbReference type="ChEBI" id="CHEBI:57453"/>
    </ligand>
</feature>
<feature type="binding site" evidence="1">
    <location>
        <begin position="121"/>
        <end position="123"/>
    </location>
    <ligand>
        <name>(6S)-5,6,7,8-tetrahydrofolate</name>
        <dbReference type="ChEBI" id="CHEBI:57453"/>
    </ligand>
</feature>
<feature type="site" description="Plays an important role in substrate specificity" evidence="1">
    <location>
        <position position="225"/>
    </location>
</feature>
<feature type="modified residue" description="N6-(pyridoxal phosphate)lysine" evidence="1">
    <location>
        <position position="226"/>
    </location>
</feature>
<proteinExistence type="inferred from homology"/>